<accession>P0A0F7</accession>
<accession>O06445</accession>
<name>RL15_STAAW</name>
<dbReference type="EMBL" id="BA000033">
    <property type="protein sequence ID" value="BAB96015.1"/>
    <property type="molecule type" value="Genomic_DNA"/>
</dbReference>
<dbReference type="RefSeq" id="WP_000766074.1">
    <property type="nucleotide sequence ID" value="NC_003923.1"/>
</dbReference>
<dbReference type="PDB" id="8Y36">
    <property type="method" value="EM"/>
    <property type="resolution" value="2.65 A"/>
    <property type="chains" value="J=1-146"/>
</dbReference>
<dbReference type="PDB" id="8Y37">
    <property type="method" value="EM"/>
    <property type="resolution" value="2.53 A"/>
    <property type="chains" value="J=1-146"/>
</dbReference>
<dbReference type="PDB" id="8Y38">
    <property type="method" value="EM"/>
    <property type="resolution" value="2.58 A"/>
    <property type="chains" value="J=1-146"/>
</dbReference>
<dbReference type="PDB" id="8Y39">
    <property type="method" value="EM"/>
    <property type="resolution" value="3.60 A"/>
    <property type="chains" value="J=1-146"/>
</dbReference>
<dbReference type="PDBsum" id="8Y36"/>
<dbReference type="PDBsum" id="8Y37"/>
<dbReference type="PDBsum" id="8Y38"/>
<dbReference type="PDBsum" id="8Y39"/>
<dbReference type="EMDB" id="EMD-38873"/>
<dbReference type="EMDB" id="EMD-38874"/>
<dbReference type="EMDB" id="EMD-38875"/>
<dbReference type="EMDB" id="EMD-38876"/>
<dbReference type="SMR" id="P0A0F7"/>
<dbReference type="GeneID" id="98346543"/>
<dbReference type="KEGG" id="sam:MW2150"/>
<dbReference type="HOGENOM" id="CLU_055188_4_2_9"/>
<dbReference type="GO" id="GO:0022625">
    <property type="term" value="C:cytosolic large ribosomal subunit"/>
    <property type="evidence" value="ECO:0007669"/>
    <property type="project" value="TreeGrafter"/>
</dbReference>
<dbReference type="GO" id="GO:0019843">
    <property type="term" value="F:rRNA binding"/>
    <property type="evidence" value="ECO:0007669"/>
    <property type="project" value="UniProtKB-UniRule"/>
</dbReference>
<dbReference type="GO" id="GO:0003735">
    <property type="term" value="F:structural constituent of ribosome"/>
    <property type="evidence" value="ECO:0007669"/>
    <property type="project" value="InterPro"/>
</dbReference>
<dbReference type="GO" id="GO:0006412">
    <property type="term" value="P:translation"/>
    <property type="evidence" value="ECO:0007669"/>
    <property type="project" value="UniProtKB-UniRule"/>
</dbReference>
<dbReference type="FunFam" id="3.100.10.10:FF:000004">
    <property type="entry name" value="50S ribosomal protein L15"/>
    <property type="match status" value="1"/>
</dbReference>
<dbReference type="Gene3D" id="3.100.10.10">
    <property type="match status" value="1"/>
</dbReference>
<dbReference type="HAMAP" id="MF_01341">
    <property type="entry name" value="Ribosomal_uL15"/>
    <property type="match status" value="1"/>
</dbReference>
<dbReference type="InterPro" id="IPR030878">
    <property type="entry name" value="Ribosomal_uL15"/>
</dbReference>
<dbReference type="InterPro" id="IPR021131">
    <property type="entry name" value="Ribosomal_uL15/eL18"/>
</dbReference>
<dbReference type="InterPro" id="IPR036227">
    <property type="entry name" value="Ribosomal_uL15/eL18_sf"/>
</dbReference>
<dbReference type="InterPro" id="IPR005749">
    <property type="entry name" value="Ribosomal_uL15_bac-type"/>
</dbReference>
<dbReference type="InterPro" id="IPR001196">
    <property type="entry name" value="Ribosomal_uL15_CS"/>
</dbReference>
<dbReference type="NCBIfam" id="TIGR01071">
    <property type="entry name" value="rplO_bact"/>
    <property type="match status" value="1"/>
</dbReference>
<dbReference type="PANTHER" id="PTHR12934">
    <property type="entry name" value="50S RIBOSOMAL PROTEIN L15"/>
    <property type="match status" value="1"/>
</dbReference>
<dbReference type="PANTHER" id="PTHR12934:SF11">
    <property type="entry name" value="LARGE RIBOSOMAL SUBUNIT PROTEIN UL15M"/>
    <property type="match status" value="1"/>
</dbReference>
<dbReference type="Pfam" id="PF00828">
    <property type="entry name" value="Ribosomal_L27A"/>
    <property type="match status" value="1"/>
</dbReference>
<dbReference type="SUPFAM" id="SSF52080">
    <property type="entry name" value="Ribosomal proteins L15p and L18e"/>
    <property type="match status" value="1"/>
</dbReference>
<dbReference type="PROSITE" id="PS00475">
    <property type="entry name" value="RIBOSOMAL_L15"/>
    <property type="match status" value="1"/>
</dbReference>
<reference key="1">
    <citation type="journal article" date="2002" name="Lancet">
        <title>Genome and virulence determinants of high virulence community-acquired MRSA.</title>
        <authorList>
            <person name="Baba T."/>
            <person name="Takeuchi F."/>
            <person name="Kuroda M."/>
            <person name="Yuzawa H."/>
            <person name="Aoki K."/>
            <person name="Oguchi A."/>
            <person name="Nagai Y."/>
            <person name="Iwama N."/>
            <person name="Asano K."/>
            <person name="Naimi T."/>
            <person name="Kuroda H."/>
            <person name="Cui L."/>
            <person name="Yamamoto K."/>
            <person name="Hiramatsu K."/>
        </authorList>
    </citation>
    <scope>NUCLEOTIDE SEQUENCE [LARGE SCALE GENOMIC DNA]</scope>
    <source>
        <strain>MW2</strain>
    </source>
</reference>
<evidence type="ECO:0000255" key="1">
    <source>
        <dbReference type="HAMAP-Rule" id="MF_01341"/>
    </source>
</evidence>
<evidence type="ECO:0000256" key="2">
    <source>
        <dbReference type="SAM" id="MobiDB-lite"/>
    </source>
</evidence>
<evidence type="ECO:0000305" key="3"/>
<protein>
    <recommendedName>
        <fullName evidence="1">Large ribosomal subunit protein uL15</fullName>
    </recommendedName>
    <alternativeName>
        <fullName evidence="3">50S ribosomal protein L15</fullName>
    </alternativeName>
</protein>
<keyword id="KW-0002">3D-structure</keyword>
<keyword id="KW-0687">Ribonucleoprotein</keyword>
<keyword id="KW-0689">Ribosomal protein</keyword>
<keyword id="KW-0694">RNA-binding</keyword>
<keyword id="KW-0699">rRNA-binding</keyword>
<sequence>MKLHELKPAEGSRKERNRVGRGVATGNGKTSGRGHKGQKARSGGGVRPGFEGGQLPLFRRLPKRGFTNINRKEYAIVNLDQLNKFEDGTEVTPALLVESGVVKNEKSGIKILGNGSLDKKLTVKAHKFSASAAEAIDAKGGAHEVI</sequence>
<organism>
    <name type="scientific">Staphylococcus aureus (strain MW2)</name>
    <dbReference type="NCBI Taxonomy" id="196620"/>
    <lineage>
        <taxon>Bacteria</taxon>
        <taxon>Bacillati</taxon>
        <taxon>Bacillota</taxon>
        <taxon>Bacilli</taxon>
        <taxon>Bacillales</taxon>
        <taxon>Staphylococcaceae</taxon>
        <taxon>Staphylococcus</taxon>
    </lineage>
</organism>
<feature type="chain" id="PRO_0000104812" description="Large ribosomal subunit protein uL15">
    <location>
        <begin position="1"/>
        <end position="146"/>
    </location>
</feature>
<feature type="region of interest" description="Disordered" evidence="2">
    <location>
        <begin position="1"/>
        <end position="54"/>
    </location>
</feature>
<feature type="compositionally biased region" description="Basic and acidic residues" evidence="2">
    <location>
        <begin position="1"/>
        <end position="18"/>
    </location>
</feature>
<feature type="compositionally biased region" description="Gly residues" evidence="2">
    <location>
        <begin position="42"/>
        <end position="52"/>
    </location>
</feature>
<proteinExistence type="evidence at protein level"/>
<gene>
    <name evidence="1" type="primary">rplO</name>
    <name type="ordered locus">MW2150</name>
</gene>
<comment type="function">
    <text evidence="1">Binds to the 23S rRNA.</text>
</comment>
<comment type="subunit">
    <text evidence="1">Part of the 50S ribosomal subunit.</text>
</comment>
<comment type="similarity">
    <text evidence="1">Belongs to the universal ribosomal protein uL15 family.</text>
</comment>